<sequence length="240" mass="25054">MMKDPLALQLLGEFLGTFILILLGDGVVAGVTLNKSKAQNAGWVAITLGWGFAVTMGVYASSFMSPAHLNPAVSLGMAVAGKFPWAYVIPYSAAQIAGGVIGGLVVWLHYYPHWQATKDAGAILGIFATGPGIRRYFWNFISEVIGTFVLVFGLLAFTKGQFTAGLNPIVVGILIIAIGLSLGGTTGYAINPARDLGPRIAHAVLPIANKGTSDWAYSWVPIAGPLVGGALGALLFNVLP</sequence>
<comment type="function">
    <text evidence="2">Transporter that facilitates the transmembrane diffusion of water, dihydroxyacetone, glycerol and H(2)O(2). Is not permeable to urea and D/L-lactic acid.</text>
</comment>
<comment type="subcellular location">
    <subcellularLocation>
        <location evidence="2">Cell membrane</location>
        <topology evidence="1">Multi-pass membrane protein</topology>
    </subcellularLocation>
</comment>
<comment type="similarity">
    <text evidence="4">Belongs to the MIP/aquaporin (TC 1.A.8) family.</text>
</comment>
<gene>
    <name evidence="3 6" type="primary">glpF3</name>
    <name evidence="6" type="ordered locus">lp_0372</name>
</gene>
<accession>F9UTW9</accession>
<evidence type="ECO:0000255" key="1"/>
<evidence type="ECO:0000269" key="2">
    <source>
    </source>
</evidence>
<evidence type="ECO:0000303" key="3">
    <source>
    </source>
</evidence>
<evidence type="ECO:0000305" key="4"/>
<evidence type="ECO:0000305" key="5">
    <source>
    </source>
</evidence>
<evidence type="ECO:0000312" key="6">
    <source>
        <dbReference type="EMBL" id="CCC77889.1"/>
    </source>
</evidence>
<reference key="1">
    <citation type="journal article" date="2003" name="Proc. Natl. Acad. Sci. U.S.A.">
        <title>Complete genome sequence of Lactobacillus plantarum WCFS1.</title>
        <authorList>
            <person name="Kleerebezem M."/>
            <person name="Boekhorst J."/>
            <person name="van Kranenburg R."/>
            <person name="Molenaar D."/>
            <person name="Kuipers O.P."/>
            <person name="Leer R."/>
            <person name="Tarchini R."/>
            <person name="Peters S.A."/>
            <person name="Sandbrink H.M."/>
            <person name="Fiers M.W.E.J."/>
            <person name="Stiekema W."/>
            <person name="Klein Lankhorst R.M."/>
            <person name="Bron P.A."/>
            <person name="Hoffer S.M."/>
            <person name="Nierop Groot M.N."/>
            <person name="Kerkhoven R."/>
            <person name="De Vries M."/>
            <person name="Ursing B."/>
            <person name="De Vos W.M."/>
            <person name="Siezen R.J."/>
        </authorList>
    </citation>
    <scope>NUCLEOTIDE SEQUENCE [LARGE SCALE GENOMIC DNA]</scope>
    <source>
        <strain>ATCC BAA-793 / NCIMB 8826 / WCFS1</strain>
    </source>
</reference>
<reference key="2">
    <citation type="journal article" date="2012" name="J. Bacteriol.">
        <title>Complete resequencing and reannotation of the Lactobacillus plantarum WCFS1 genome.</title>
        <authorList>
            <person name="Siezen R.J."/>
            <person name="Francke C."/>
            <person name="Renckens B."/>
            <person name="Boekhorst J."/>
            <person name="Wels M."/>
            <person name="Kleerebezem M."/>
            <person name="van Hijum S.A."/>
        </authorList>
    </citation>
    <scope>NUCLEOTIDE SEQUENCE [LARGE SCALE GENOMIC DNA]</scope>
    <scope>GENOME REANNOTATION</scope>
    <source>
        <strain>ATCC BAA-793 / NCIMB 8826 / WCFS1</strain>
    </source>
</reference>
<reference key="3">
    <citation type="journal article" date="2013" name="Biochem. J.">
        <title>Channel-mediated lactic acid transport: a novel function for aquaglyceroporins in bacteria.</title>
        <authorList>
            <person name="Bienert G.P."/>
            <person name="Desguin B."/>
            <person name="Chaumont F."/>
            <person name="Hols P."/>
        </authorList>
    </citation>
    <scope>FUNCTION</scope>
    <scope>SUBCELLULAR LOCATION</scope>
    <source>
        <strain>ATCC BAA-793 / NCIMB 8826 / WCFS1</strain>
    </source>
</reference>
<feature type="chain" id="PRO_0000441644" description="Glycerol uptake facilitator protein 3">
    <location>
        <begin position="1"/>
        <end position="240"/>
    </location>
</feature>
<feature type="transmembrane region" description="Helical" evidence="1">
    <location>
        <begin position="11"/>
        <end position="31"/>
    </location>
</feature>
<feature type="transmembrane region" description="Helical" evidence="1">
    <location>
        <begin position="41"/>
        <end position="61"/>
    </location>
</feature>
<feature type="transmembrane region" description="Helical" evidence="1">
    <location>
        <begin position="88"/>
        <end position="108"/>
    </location>
</feature>
<feature type="transmembrane region" description="Helical" evidence="1">
    <location>
        <begin position="137"/>
        <end position="157"/>
    </location>
</feature>
<feature type="transmembrane region" description="Helical" evidence="1">
    <location>
        <begin position="162"/>
        <end position="182"/>
    </location>
</feature>
<feature type="transmembrane region" description="Helical" evidence="1">
    <location>
        <begin position="219"/>
        <end position="239"/>
    </location>
</feature>
<feature type="short sequence motif" description="NPA 1" evidence="5">
    <location>
        <begin position="70"/>
        <end position="72"/>
    </location>
</feature>
<feature type="short sequence motif" description="NPA 2" evidence="5">
    <location>
        <begin position="191"/>
        <end position="193"/>
    </location>
</feature>
<proteinExistence type="inferred from homology"/>
<name>GLPF3_LACPL</name>
<protein>
    <recommendedName>
        <fullName evidence="3">Glycerol uptake facilitator protein 3</fullName>
    </recommendedName>
</protein>
<dbReference type="EMBL" id="AL935263">
    <property type="protein sequence ID" value="CCC77889.1"/>
    <property type="molecule type" value="Genomic_DNA"/>
</dbReference>
<dbReference type="RefSeq" id="WP_003641945.1">
    <property type="nucleotide sequence ID" value="NC_004567.2"/>
</dbReference>
<dbReference type="RefSeq" id="YP_004888403.1">
    <property type="nucleotide sequence ID" value="NC_004567.2"/>
</dbReference>
<dbReference type="SMR" id="F9UTW9"/>
<dbReference type="STRING" id="220668.lp_0372"/>
<dbReference type="EnsemblBacteria" id="CCC77889">
    <property type="protein sequence ID" value="CCC77889"/>
    <property type="gene ID" value="lp_0372"/>
</dbReference>
<dbReference type="KEGG" id="lpl:lp_0372"/>
<dbReference type="PATRIC" id="fig|220668.9.peg.316"/>
<dbReference type="eggNOG" id="COG0580">
    <property type="taxonomic scope" value="Bacteria"/>
</dbReference>
<dbReference type="HOGENOM" id="CLU_020019_9_2_9"/>
<dbReference type="OrthoDB" id="9807293at2"/>
<dbReference type="PhylomeDB" id="F9UTW9"/>
<dbReference type="Proteomes" id="UP000000432">
    <property type="component" value="Chromosome"/>
</dbReference>
<dbReference type="GO" id="GO:0005886">
    <property type="term" value="C:plasma membrane"/>
    <property type="evidence" value="ECO:0007669"/>
    <property type="project" value="UniProtKB-SubCell"/>
</dbReference>
<dbReference type="GO" id="GO:0015254">
    <property type="term" value="F:glycerol channel activity"/>
    <property type="evidence" value="ECO:0007669"/>
    <property type="project" value="TreeGrafter"/>
</dbReference>
<dbReference type="Gene3D" id="1.20.1080.10">
    <property type="entry name" value="Glycerol uptake facilitator protein"/>
    <property type="match status" value="1"/>
</dbReference>
<dbReference type="InterPro" id="IPR023271">
    <property type="entry name" value="Aquaporin-like"/>
</dbReference>
<dbReference type="InterPro" id="IPR000425">
    <property type="entry name" value="MIP"/>
</dbReference>
<dbReference type="InterPro" id="IPR050363">
    <property type="entry name" value="MIP/Aquaporin"/>
</dbReference>
<dbReference type="InterPro" id="IPR022357">
    <property type="entry name" value="MIP_CS"/>
</dbReference>
<dbReference type="NCBIfam" id="TIGR00861">
    <property type="entry name" value="MIP"/>
    <property type="match status" value="1"/>
</dbReference>
<dbReference type="PANTHER" id="PTHR43829">
    <property type="entry name" value="AQUAPORIN OR AQUAGLYCEROPORIN RELATED"/>
    <property type="match status" value="1"/>
</dbReference>
<dbReference type="PANTHER" id="PTHR43829:SF9">
    <property type="entry name" value="AQUAPORIN-9"/>
    <property type="match status" value="1"/>
</dbReference>
<dbReference type="Pfam" id="PF00230">
    <property type="entry name" value="MIP"/>
    <property type="match status" value="1"/>
</dbReference>
<dbReference type="PRINTS" id="PR00783">
    <property type="entry name" value="MINTRINSICP"/>
</dbReference>
<dbReference type="SUPFAM" id="SSF81338">
    <property type="entry name" value="Aquaporin-like"/>
    <property type="match status" value="1"/>
</dbReference>
<dbReference type="PROSITE" id="PS00221">
    <property type="entry name" value="MIP"/>
    <property type="match status" value="1"/>
</dbReference>
<keyword id="KW-1003">Cell membrane</keyword>
<keyword id="KW-0472">Membrane</keyword>
<keyword id="KW-1185">Reference proteome</keyword>
<keyword id="KW-0812">Transmembrane</keyword>
<keyword id="KW-1133">Transmembrane helix</keyword>
<keyword id="KW-0813">Transport</keyword>
<organism>
    <name type="scientific">Lactiplantibacillus plantarum (strain ATCC BAA-793 / NCIMB 8826 / WCFS1)</name>
    <name type="common">Lactobacillus plantarum</name>
    <dbReference type="NCBI Taxonomy" id="220668"/>
    <lineage>
        <taxon>Bacteria</taxon>
        <taxon>Bacillati</taxon>
        <taxon>Bacillota</taxon>
        <taxon>Bacilli</taxon>
        <taxon>Lactobacillales</taxon>
        <taxon>Lactobacillaceae</taxon>
        <taxon>Lactiplantibacillus</taxon>
    </lineage>
</organism>